<name>RS13_ACISJ</name>
<accession>A1W330</accession>
<evidence type="ECO:0000255" key="1">
    <source>
        <dbReference type="HAMAP-Rule" id="MF_01315"/>
    </source>
</evidence>
<evidence type="ECO:0000256" key="2">
    <source>
        <dbReference type="SAM" id="MobiDB-lite"/>
    </source>
</evidence>
<evidence type="ECO:0000305" key="3"/>
<gene>
    <name evidence="1" type="primary">rpsM</name>
    <name type="ordered locus">Ajs_0403</name>
</gene>
<proteinExistence type="inferred from homology"/>
<reference key="1">
    <citation type="submission" date="2006-12" db="EMBL/GenBank/DDBJ databases">
        <title>Complete sequence of chromosome 1 of Acidovorax sp. JS42.</title>
        <authorList>
            <person name="Copeland A."/>
            <person name="Lucas S."/>
            <person name="Lapidus A."/>
            <person name="Barry K."/>
            <person name="Detter J.C."/>
            <person name="Glavina del Rio T."/>
            <person name="Dalin E."/>
            <person name="Tice H."/>
            <person name="Pitluck S."/>
            <person name="Chertkov O."/>
            <person name="Brettin T."/>
            <person name="Bruce D."/>
            <person name="Han C."/>
            <person name="Tapia R."/>
            <person name="Gilna P."/>
            <person name="Schmutz J."/>
            <person name="Larimer F."/>
            <person name="Land M."/>
            <person name="Hauser L."/>
            <person name="Kyrpides N."/>
            <person name="Kim E."/>
            <person name="Stahl D."/>
            <person name="Richardson P."/>
        </authorList>
    </citation>
    <scope>NUCLEOTIDE SEQUENCE [LARGE SCALE GENOMIC DNA]</scope>
    <source>
        <strain>JS42</strain>
    </source>
</reference>
<comment type="function">
    <text evidence="1">Located at the top of the head of the 30S subunit, it contacts several helices of the 16S rRNA. In the 70S ribosome it contacts the 23S rRNA (bridge B1a) and protein L5 of the 50S subunit (bridge B1b), connecting the 2 subunits; these bridges are implicated in subunit movement. Contacts the tRNAs in the A and P-sites.</text>
</comment>
<comment type="subunit">
    <text evidence="1">Part of the 30S ribosomal subunit. Forms a loose heterodimer with protein S19. Forms two bridges to the 50S subunit in the 70S ribosome.</text>
</comment>
<comment type="similarity">
    <text evidence="1">Belongs to the universal ribosomal protein uS13 family.</text>
</comment>
<organism>
    <name type="scientific">Acidovorax sp. (strain JS42)</name>
    <dbReference type="NCBI Taxonomy" id="232721"/>
    <lineage>
        <taxon>Bacteria</taxon>
        <taxon>Pseudomonadati</taxon>
        <taxon>Pseudomonadota</taxon>
        <taxon>Betaproteobacteria</taxon>
        <taxon>Burkholderiales</taxon>
        <taxon>Comamonadaceae</taxon>
        <taxon>Acidovorax</taxon>
    </lineage>
</organism>
<keyword id="KW-0687">Ribonucleoprotein</keyword>
<keyword id="KW-0689">Ribosomal protein</keyword>
<keyword id="KW-0694">RNA-binding</keyword>
<keyword id="KW-0699">rRNA-binding</keyword>
<keyword id="KW-0820">tRNA-binding</keyword>
<sequence>MARIAGINIPPHQHTEIGLTAIYGIGRTRARKICEACGIAYSKKVKELTDADLEKIRDQIAQFTIEGDLRRETTMNIKRLMDIGCYRGFRHRRGLPMRGQRTRTNARTRKGPRKGAAALKK</sequence>
<protein>
    <recommendedName>
        <fullName evidence="1">Small ribosomal subunit protein uS13</fullName>
    </recommendedName>
    <alternativeName>
        <fullName evidence="3">30S ribosomal protein S13</fullName>
    </alternativeName>
</protein>
<dbReference type="EMBL" id="CP000539">
    <property type="protein sequence ID" value="ABM40655.1"/>
    <property type="molecule type" value="Genomic_DNA"/>
</dbReference>
<dbReference type="SMR" id="A1W330"/>
<dbReference type="STRING" id="232721.Ajs_0403"/>
<dbReference type="KEGG" id="ajs:Ajs_0403"/>
<dbReference type="eggNOG" id="COG0099">
    <property type="taxonomic scope" value="Bacteria"/>
</dbReference>
<dbReference type="HOGENOM" id="CLU_103849_1_2_4"/>
<dbReference type="Proteomes" id="UP000000645">
    <property type="component" value="Chromosome"/>
</dbReference>
<dbReference type="GO" id="GO:0005829">
    <property type="term" value="C:cytosol"/>
    <property type="evidence" value="ECO:0007669"/>
    <property type="project" value="TreeGrafter"/>
</dbReference>
<dbReference type="GO" id="GO:0015935">
    <property type="term" value="C:small ribosomal subunit"/>
    <property type="evidence" value="ECO:0007669"/>
    <property type="project" value="TreeGrafter"/>
</dbReference>
<dbReference type="GO" id="GO:0019843">
    <property type="term" value="F:rRNA binding"/>
    <property type="evidence" value="ECO:0007669"/>
    <property type="project" value="UniProtKB-UniRule"/>
</dbReference>
<dbReference type="GO" id="GO:0003735">
    <property type="term" value="F:structural constituent of ribosome"/>
    <property type="evidence" value="ECO:0007669"/>
    <property type="project" value="InterPro"/>
</dbReference>
<dbReference type="GO" id="GO:0000049">
    <property type="term" value="F:tRNA binding"/>
    <property type="evidence" value="ECO:0007669"/>
    <property type="project" value="UniProtKB-UniRule"/>
</dbReference>
<dbReference type="GO" id="GO:0006412">
    <property type="term" value="P:translation"/>
    <property type="evidence" value="ECO:0007669"/>
    <property type="project" value="UniProtKB-UniRule"/>
</dbReference>
<dbReference type="FunFam" id="1.10.8.50:FF:000001">
    <property type="entry name" value="30S ribosomal protein S13"/>
    <property type="match status" value="1"/>
</dbReference>
<dbReference type="FunFam" id="4.10.910.10:FF:000001">
    <property type="entry name" value="30S ribosomal protein S13"/>
    <property type="match status" value="1"/>
</dbReference>
<dbReference type="Gene3D" id="1.10.8.50">
    <property type="match status" value="1"/>
</dbReference>
<dbReference type="Gene3D" id="4.10.910.10">
    <property type="entry name" value="30s ribosomal protein s13, domain 2"/>
    <property type="match status" value="1"/>
</dbReference>
<dbReference type="HAMAP" id="MF_01315">
    <property type="entry name" value="Ribosomal_uS13"/>
    <property type="match status" value="1"/>
</dbReference>
<dbReference type="InterPro" id="IPR027437">
    <property type="entry name" value="Rbsml_uS13_C"/>
</dbReference>
<dbReference type="InterPro" id="IPR001892">
    <property type="entry name" value="Ribosomal_uS13"/>
</dbReference>
<dbReference type="InterPro" id="IPR010979">
    <property type="entry name" value="Ribosomal_uS13-like_H2TH"/>
</dbReference>
<dbReference type="InterPro" id="IPR019980">
    <property type="entry name" value="Ribosomal_uS13_bac-type"/>
</dbReference>
<dbReference type="InterPro" id="IPR018269">
    <property type="entry name" value="Ribosomal_uS13_CS"/>
</dbReference>
<dbReference type="NCBIfam" id="TIGR03631">
    <property type="entry name" value="uS13_bact"/>
    <property type="match status" value="1"/>
</dbReference>
<dbReference type="PANTHER" id="PTHR10871">
    <property type="entry name" value="30S RIBOSOMAL PROTEIN S13/40S RIBOSOMAL PROTEIN S18"/>
    <property type="match status" value="1"/>
</dbReference>
<dbReference type="PANTHER" id="PTHR10871:SF1">
    <property type="entry name" value="SMALL RIBOSOMAL SUBUNIT PROTEIN US13M"/>
    <property type="match status" value="1"/>
</dbReference>
<dbReference type="Pfam" id="PF00416">
    <property type="entry name" value="Ribosomal_S13"/>
    <property type="match status" value="1"/>
</dbReference>
<dbReference type="PIRSF" id="PIRSF002134">
    <property type="entry name" value="Ribosomal_S13"/>
    <property type="match status" value="1"/>
</dbReference>
<dbReference type="SUPFAM" id="SSF46946">
    <property type="entry name" value="S13-like H2TH domain"/>
    <property type="match status" value="1"/>
</dbReference>
<dbReference type="PROSITE" id="PS00646">
    <property type="entry name" value="RIBOSOMAL_S13_1"/>
    <property type="match status" value="1"/>
</dbReference>
<dbReference type="PROSITE" id="PS50159">
    <property type="entry name" value="RIBOSOMAL_S13_2"/>
    <property type="match status" value="1"/>
</dbReference>
<feature type="chain" id="PRO_0000306551" description="Small ribosomal subunit protein uS13">
    <location>
        <begin position="1"/>
        <end position="121"/>
    </location>
</feature>
<feature type="region of interest" description="Disordered" evidence="2">
    <location>
        <begin position="93"/>
        <end position="121"/>
    </location>
</feature>